<dbReference type="EMBL" id="CP000102">
    <property type="protein sequence ID" value="ABC56971.1"/>
    <property type="molecule type" value="Genomic_DNA"/>
</dbReference>
<dbReference type="SMR" id="Q2NGT2"/>
<dbReference type="STRING" id="339860.Msp_0572"/>
<dbReference type="KEGG" id="mst:Msp_0572"/>
<dbReference type="eggNOG" id="arCOG00873">
    <property type="taxonomic scope" value="Archaea"/>
</dbReference>
<dbReference type="eggNOG" id="arCOG04753">
    <property type="taxonomic scope" value="Archaea"/>
</dbReference>
<dbReference type="HOGENOM" id="CLU_014841_3_2_2"/>
<dbReference type="Proteomes" id="UP000001931">
    <property type="component" value="Chromosome"/>
</dbReference>
<dbReference type="GO" id="GO:0005737">
    <property type="term" value="C:cytoplasm"/>
    <property type="evidence" value="ECO:0007669"/>
    <property type="project" value="UniProtKB-SubCell"/>
</dbReference>
<dbReference type="GO" id="GO:0009380">
    <property type="term" value="C:excinuclease repair complex"/>
    <property type="evidence" value="ECO:0007669"/>
    <property type="project" value="InterPro"/>
</dbReference>
<dbReference type="GO" id="GO:0003677">
    <property type="term" value="F:DNA binding"/>
    <property type="evidence" value="ECO:0007669"/>
    <property type="project" value="UniProtKB-UniRule"/>
</dbReference>
<dbReference type="GO" id="GO:0009381">
    <property type="term" value="F:excinuclease ABC activity"/>
    <property type="evidence" value="ECO:0007669"/>
    <property type="project" value="UniProtKB-UniRule"/>
</dbReference>
<dbReference type="GO" id="GO:0006289">
    <property type="term" value="P:nucleotide-excision repair"/>
    <property type="evidence" value="ECO:0007669"/>
    <property type="project" value="UniProtKB-UniRule"/>
</dbReference>
<dbReference type="GO" id="GO:0009432">
    <property type="term" value="P:SOS response"/>
    <property type="evidence" value="ECO:0007669"/>
    <property type="project" value="UniProtKB-UniRule"/>
</dbReference>
<dbReference type="CDD" id="cd10434">
    <property type="entry name" value="GIY-YIG_UvrC_Cho"/>
    <property type="match status" value="1"/>
</dbReference>
<dbReference type="FunFam" id="1.10.150.20:FF:000005">
    <property type="entry name" value="UvrABC system protein C"/>
    <property type="match status" value="1"/>
</dbReference>
<dbReference type="FunFam" id="3.40.1440.10:FF:000001">
    <property type="entry name" value="UvrABC system protein C"/>
    <property type="match status" value="1"/>
</dbReference>
<dbReference type="Gene3D" id="1.10.150.20">
    <property type="entry name" value="5' to 3' exonuclease, C-terminal subdomain"/>
    <property type="match status" value="1"/>
</dbReference>
<dbReference type="Gene3D" id="3.40.1440.10">
    <property type="entry name" value="GIY-YIG endonuclease"/>
    <property type="match status" value="1"/>
</dbReference>
<dbReference type="Gene3D" id="4.10.860.10">
    <property type="entry name" value="UVR domain"/>
    <property type="match status" value="1"/>
</dbReference>
<dbReference type="Gene3D" id="3.30.420.340">
    <property type="entry name" value="UvrC, RNAse H endonuclease domain"/>
    <property type="match status" value="1"/>
</dbReference>
<dbReference type="HAMAP" id="MF_00203">
    <property type="entry name" value="UvrC"/>
    <property type="match status" value="1"/>
</dbReference>
<dbReference type="InterPro" id="IPR000305">
    <property type="entry name" value="GIY-YIG_endonuc"/>
</dbReference>
<dbReference type="InterPro" id="IPR035901">
    <property type="entry name" value="GIY-YIG_endonuc_sf"/>
</dbReference>
<dbReference type="InterPro" id="IPR047296">
    <property type="entry name" value="GIY-YIG_UvrC_Cho"/>
</dbReference>
<dbReference type="InterPro" id="IPR003583">
    <property type="entry name" value="Hlx-hairpin-Hlx_DNA-bd_motif"/>
</dbReference>
<dbReference type="InterPro" id="IPR010994">
    <property type="entry name" value="RuvA_2-like"/>
</dbReference>
<dbReference type="InterPro" id="IPR001943">
    <property type="entry name" value="UVR_dom"/>
</dbReference>
<dbReference type="InterPro" id="IPR036876">
    <property type="entry name" value="UVR_dom_sf"/>
</dbReference>
<dbReference type="InterPro" id="IPR050066">
    <property type="entry name" value="UvrABC_protein_C"/>
</dbReference>
<dbReference type="InterPro" id="IPR004791">
    <property type="entry name" value="UvrC"/>
</dbReference>
<dbReference type="InterPro" id="IPR001162">
    <property type="entry name" value="UvrC_RNase_H_dom"/>
</dbReference>
<dbReference type="InterPro" id="IPR038476">
    <property type="entry name" value="UvrC_RNase_H_dom_sf"/>
</dbReference>
<dbReference type="NCBIfam" id="NF001824">
    <property type="entry name" value="PRK00558.1-5"/>
    <property type="match status" value="1"/>
</dbReference>
<dbReference type="NCBIfam" id="TIGR00194">
    <property type="entry name" value="uvrC"/>
    <property type="match status" value="1"/>
</dbReference>
<dbReference type="PANTHER" id="PTHR30562:SF1">
    <property type="entry name" value="UVRABC SYSTEM PROTEIN C"/>
    <property type="match status" value="1"/>
</dbReference>
<dbReference type="PANTHER" id="PTHR30562">
    <property type="entry name" value="UVRC/OXIDOREDUCTASE"/>
    <property type="match status" value="1"/>
</dbReference>
<dbReference type="Pfam" id="PF01541">
    <property type="entry name" value="GIY-YIG"/>
    <property type="match status" value="1"/>
</dbReference>
<dbReference type="Pfam" id="PF14520">
    <property type="entry name" value="HHH_5"/>
    <property type="match status" value="1"/>
</dbReference>
<dbReference type="Pfam" id="PF02151">
    <property type="entry name" value="UVR"/>
    <property type="match status" value="1"/>
</dbReference>
<dbReference type="Pfam" id="PF22920">
    <property type="entry name" value="UvrC_RNaseH"/>
    <property type="match status" value="1"/>
</dbReference>
<dbReference type="Pfam" id="PF08459">
    <property type="entry name" value="UvrC_RNaseH_dom"/>
    <property type="match status" value="1"/>
</dbReference>
<dbReference type="SMART" id="SM00465">
    <property type="entry name" value="GIYc"/>
    <property type="match status" value="1"/>
</dbReference>
<dbReference type="SMART" id="SM00278">
    <property type="entry name" value="HhH1"/>
    <property type="match status" value="2"/>
</dbReference>
<dbReference type="SUPFAM" id="SSF46600">
    <property type="entry name" value="C-terminal UvrC-binding domain of UvrB"/>
    <property type="match status" value="1"/>
</dbReference>
<dbReference type="SUPFAM" id="SSF82771">
    <property type="entry name" value="GIY-YIG endonuclease"/>
    <property type="match status" value="1"/>
</dbReference>
<dbReference type="SUPFAM" id="SSF47781">
    <property type="entry name" value="RuvA domain 2-like"/>
    <property type="match status" value="1"/>
</dbReference>
<dbReference type="PROSITE" id="PS50164">
    <property type="entry name" value="GIY_YIG"/>
    <property type="match status" value="1"/>
</dbReference>
<dbReference type="PROSITE" id="PS50151">
    <property type="entry name" value="UVR"/>
    <property type="match status" value="1"/>
</dbReference>
<dbReference type="PROSITE" id="PS50165">
    <property type="entry name" value="UVRC"/>
    <property type="match status" value="1"/>
</dbReference>
<gene>
    <name evidence="1" type="primary">uvrC</name>
    <name type="ordered locus">Msp_0572</name>
</gene>
<proteinExistence type="inferred from homology"/>
<comment type="function">
    <text evidence="1">The UvrABC repair system catalyzes the recognition and processing of DNA lesions. UvrC both incises the 5' and 3' sides of the lesion. The N-terminal half is responsible for the 3' incision and the C-terminal half is responsible for the 5' incision.</text>
</comment>
<comment type="subunit">
    <text evidence="1">Interacts with UvrB in an incision complex.</text>
</comment>
<comment type="subcellular location">
    <subcellularLocation>
        <location evidence="1">Cytoplasm</location>
    </subcellularLocation>
</comment>
<comment type="similarity">
    <text evidence="1">Belongs to the UvrC family.</text>
</comment>
<keyword id="KW-0963">Cytoplasm</keyword>
<keyword id="KW-0227">DNA damage</keyword>
<keyword id="KW-0228">DNA excision</keyword>
<keyword id="KW-0234">DNA repair</keyword>
<keyword id="KW-0267">Excision nuclease</keyword>
<keyword id="KW-1185">Reference proteome</keyword>
<keyword id="KW-0742">SOS response</keyword>
<reference key="1">
    <citation type="journal article" date="2006" name="J. Bacteriol.">
        <title>The genome sequence of Methanosphaera stadtmanae reveals why this human intestinal archaeon is restricted to methanol and H2 for methane formation and ATP synthesis.</title>
        <authorList>
            <person name="Fricke W.F."/>
            <person name="Seedorf H."/>
            <person name="Henne A."/>
            <person name="Kruer M."/>
            <person name="Liesegang H."/>
            <person name="Hedderich R."/>
            <person name="Gottschalk G."/>
            <person name="Thauer R.K."/>
        </authorList>
    </citation>
    <scope>NUCLEOTIDE SEQUENCE [LARGE SCALE GENOMIC DNA]</scope>
    <source>
        <strain>ATCC 43021 / DSM 3091 / JCM 11832 / MCB-3</strain>
    </source>
</reference>
<protein>
    <recommendedName>
        <fullName evidence="1">UvrABC system protein C</fullName>
        <shortName evidence="1">Protein UvrC</shortName>
    </recommendedName>
    <alternativeName>
        <fullName evidence="1">Excinuclease ABC subunit C</fullName>
    </alternativeName>
</protein>
<organism>
    <name type="scientific">Methanosphaera stadtmanae (strain ATCC 43021 / DSM 3091 / JCM 11832 / MCB-3)</name>
    <dbReference type="NCBI Taxonomy" id="339860"/>
    <lineage>
        <taxon>Archaea</taxon>
        <taxon>Methanobacteriati</taxon>
        <taxon>Methanobacteriota</taxon>
        <taxon>Methanomada group</taxon>
        <taxon>Methanobacteria</taxon>
        <taxon>Methanobacteriales</taxon>
        <taxon>Methanobacteriaceae</taxon>
        <taxon>Methanosphaera</taxon>
    </lineage>
</organism>
<evidence type="ECO:0000255" key="1">
    <source>
        <dbReference type="HAMAP-Rule" id="MF_00203"/>
    </source>
</evidence>
<sequence length="598" mass="69341">MKLKTPDEVPQKPGVYIMHNKEDEVIYVGKAKKLKSRLQSYFRDEDKLDRPKTQFLMRHFSYFEYILTNTEKEALILEANLIKKYRPHYNISLKDGKQYPYIKITNEDFPRIYITRNIVNDKASYYGPYTDSTHARAFIDFLNKNFQIRTCKHMDGPCLNYQIKQCSAPCVNYISQEEYNRNIRRVKLLLQGKYKTTIKKLKKDMNRYAKNMEFEKAAMLRDQIDTIKITLEKQNIQPNQDVNQDIIGFDHNNEEAAVVILSVRSGKTNKKDDLVLKGIKGFSDKQIRTEFIKQYYSTAPLPDEIILEDDIEDKDVIVEWLEEKANHKIKITVATDGHYITLIKIAKKNAHISLTENTKEEENPLLTLEKYLNLPRLPYHIEAFDISNISGIYAVASMVVFENGKPAKKMYRKFKMNTPGPNDFAMMKEVITRRYSHISPNNTNNTSDSLSIHPDLVLIDGGKGQLGMAVDVFKKLNITDVPLAGLAKKFEEVYLPGQTNPIILPRQSSALHLLQYVRDESHRFAITFHRKLRSKAFTKSILDDIPGVGKKRKQALLTHFESLDNIYNASFDEICQVKGINQKLAKTIYETLKEDKKE</sequence>
<accession>Q2NGT2</accession>
<name>UVRC_METST</name>
<feature type="chain" id="PRO_0000264986" description="UvrABC system protein C">
    <location>
        <begin position="1"/>
        <end position="598"/>
    </location>
</feature>
<feature type="domain" description="GIY-YIG" evidence="1">
    <location>
        <begin position="11"/>
        <end position="91"/>
    </location>
</feature>
<feature type="domain" description="UVR" evidence="1">
    <location>
        <begin position="195"/>
        <end position="230"/>
    </location>
</feature>